<name>ACSA_PYRAE</name>
<accession>O93730</accession>
<sequence length="670" mass="76178">MSLELKEKESELPFDEQIINDKWRSKYTPIDAYFKFHRQTVENLESFWESVAKELEWFKPWDKVLDASNPPFYKWFVGGRLNLSYLAVDRHVKTWRKNKLAIEWEGEPVDENGYPTDRRKLTYYDLYREVNRVAYMLKQNFGVKKGDKITLYLPMVPELPITMLAAWRIGAITSVVFSGFSADALAERINDSQSRIVITADGFWRRGRVVRLKEVVDAALEKATGVESVIVLPRLGLKDVPMTEGRDYWWNKLMQGIPPNAYIEPEPVESEHPSFILYTSGTTGKPKGIVHDTGGWAVHVYATMKWVFDIRDDDIFWCTADIGWVTGHSYVVLGPLLMGATEVIYEGAPDYPQPDRWWSIIERYGVTIFYTSPTAIRMFMRYGEEWPRKHDLSTLRIIHSVGEPINPEAWRWAYRVLGNEKVAFGSTWWMTETGGIVISHAPGLYLVPMKPGTNGPPLPGFEVDVVDENGNPAPPGVKGYLVIKKPWPGMLHGIWGDPERYIKTYWSRFPGMFYAGDYAIKDKDGYIWVLGRADEVIKVAGHRLGTYELESALISHPAVAESAVVGVPDAIKGEVPIAFVVLKQGVAPSDELRKELREHVRRTIGPIAEPAQIFFVTKLPKTRSGKIMRRLLKAVATGAPLGDVTTLEDETSVEEAKRAYEEIKAEMART</sequence>
<evidence type="ECO:0000255" key="1">
    <source>
        <dbReference type="HAMAP-Rule" id="MF_01123"/>
    </source>
</evidence>
<proteinExistence type="inferred from homology"/>
<gene>
    <name evidence="1" type="primary">acsA</name>
    <name type="synonym">acs</name>
    <name type="ordered locus">PAE2867</name>
</gene>
<comment type="function">
    <text evidence="1">Catalyzes the conversion of acetate into acetyl-CoA (AcCoA), an essential intermediate at the junction of anabolic and catabolic pathways. AcsA undergoes a two-step reaction. In the first half reaction, AcsA combines acetate with ATP to form acetyl-adenylate (AcAMP) intermediate. In the second half reaction, it can then transfer the acetyl group from AcAMP to the sulfhydryl group of CoA, forming the product AcCoA.</text>
</comment>
<comment type="catalytic activity">
    <reaction evidence="1">
        <text>acetate + ATP + CoA = acetyl-CoA + AMP + diphosphate</text>
        <dbReference type="Rhea" id="RHEA:23176"/>
        <dbReference type="ChEBI" id="CHEBI:30089"/>
        <dbReference type="ChEBI" id="CHEBI:30616"/>
        <dbReference type="ChEBI" id="CHEBI:33019"/>
        <dbReference type="ChEBI" id="CHEBI:57287"/>
        <dbReference type="ChEBI" id="CHEBI:57288"/>
        <dbReference type="ChEBI" id="CHEBI:456215"/>
        <dbReference type="EC" id="6.2.1.1"/>
    </reaction>
</comment>
<comment type="cofactor">
    <cofactor evidence="1">
        <name>Mg(2+)</name>
        <dbReference type="ChEBI" id="CHEBI:18420"/>
    </cofactor>
</comment>
<comment type="PTM">
    <text evidence="1">Acetylated. Deacetylation by the SIR2-homolog deacetylase activates the enzyme.</text>
</comment>
<comment type="similarity">
    <text evidence="1">Belongs to the ATP-dependent AMP-binding enzyme family.</text>
</comment>
<feature type="chain" id="PRO_0000208402" description="Acetyl-coenzyme A synthetase">
    <location>
        <begin position="1"/>
        <end position="670"/>
    </location>
</feature>
<feature type="binding site" evidence="1">
    <location>
        <begin position="205"/>
        <end position="208"/>
    </location>
    <ligand>
        <name>CoA</name>
        <dbReference type="ChEBI" id="CHEBI:57287"/>
    </ligand>
</feature>
<feature type="binding site" evidence="1">
    <location>
        <position position="326"/>
    </location>
    <ligand>
        <name>CoA</name>
        <dbReference type="ChEBI" id="CHEBI:57287"/>
    </ligand>
</feature>
<feature type="binding site" evidence="1">
    <location>
        <begin position="402"/>
        <end position="404"/>
    </location>
    <ligand>
        <name>ATP</name>
        <dbReference type="ChEBI" id="CHEBI:30616"/>
    </ligand>
</feature>
<feature type="binding site" evidence="1">
    <location>
        <begin position="426"/>
        <end position="431"/>
    </location>
    <ligand>
        <name>ATP</name>
        <dbReference type="ChEBI" id="CHEBI:30616"/>
    </ligand>
</feature>
<feature type="binding site" evidence="1">
    <location>
        <position position="517"/>
    </location>
    <ligand>
        <name>ATP</name>
        <dbReference type="ChEBI" id="CHEBI:30616"/>
    </ligand>
</feature>
<feature type="binding site" evidence="1">
    <location>
        <position position="532"/>
    </location>
    <ligand>
        <name>ATP</name>
        <dbReference type="ChEBI" id="CHEBI:30616"/>
    </ligand>
</feature>
<feature type="binding site" evidence="1">
    <location>
        <position position="543"/>
    </location>
    <ligand>
        <name>ATP</name>
        <dbReference type="ChEBI" id="CHEBI:30616"/>
    </ligand>
</feature>
<feature type="binding site" evidence="1">
    <location>
        <position position="556"/>
    </location>
    <ligand>
        <name>Mg(2+)</name>
        <dbReference type="ChEBI" id="CHEBI:18420"/>
    </ligand>
</feature>
<feature type="binding site" evidence="1">
    <location>
        <position position="559"/>
    </location>
    <ligand>
        <name>Mg(2+)</name>
        <dbReference type="ChEBI" id="CHEBI:18420"/>
    </ligand>
</feature>
<feature type="binding site" evidence="1">
    <location>
        <position position="601"/>
    </location>
    <ligand>
        <name>CoA</name>
        <dbReference type="ChEBI" id="CHEBI:57287"/>
    </ligand>
</feature>
<feature type="modified residue" description="N6-acetyllysine" evidence="1">
    <location>
        <position position="626"/>
    </location>
</feature>
<dbReference type="EC" id="6.2.1.1" evidence="1"/>
<dbReference type="EMBL" id="U94348">
    <property type="protein sequence ID" value="AAD09253.2"/>
    <property type="molecule type" value="Genomic_DNA"/>
</dbReference>
<dbReference type="EMBL" id="AE009441">
    <property type="protein sequence ID" value="AAL64497.1"/>
    <property type="molecule type" value="Genomic_DNA"/>
</dbReference>
<dbReference type="PIR" id="T44965">
    <property type="entry name" value="T44965"/>
</dbReference>
<dbReference type="RefSeq" id="WP_011008965.1">
    <property type="nucleotide sequence ID" value="NC_003364.1"/>
</dbReference>
<dbReference type="SMR" id="O93730"/>
<dbReference type="FunCoup" id="O93730">
    <property type="interactions" value="223"/>
</dbReference>
<dbReference type="STRING" id="178306.PAE2867"/>
<dbReference type="EnsemblBacteria" id="AAL64497">
    <property type="protein sequence ID" value="AAL64497"/>
    <property type="gene ID" value="PAE2867"/>
</dbReference>
<dbReference type="GeneID" id="1463659"/>
<dbReference type="KEGG" id="pai:PAE2867"/>
<dbReference type="PATRIC" id="fig|178306.9.peg.2142"/>
<dbReference type="eggNOG" id="arCOG04201">
    <property type="taxonomic scope" value="Archaea"/>
</dbReference>
<dbReference type="HOGENOM" id="CLU_000022_3_6_2"/>
<dbReference type="InParanoid" id="O93730"/>
<dbReference type="Proteomes" id="UP000002439">
    <property type="component" value="Chromosome"/>
</dbReference>
<dbReference type="GO" id="GO:0003987">
    <property type="term" value="F:acetate-CoA ligase activity"/>
    <property type="evidence" value="ECO:0000318"/>
    <property type="project" value="GO_Central"/>
</dbReference>
<dbReference type="GO" id="GO:0016208">
    <property type="term" value="F:AMP binding"/>
    <property type="evidence" value="ECO:0007669"/>
    <property type="project" value="InterPro"/>
</dbReference>
<dbReference type="GO" id="GO:0005524">
    <property type="term" value="F:ATP binding"/>
    <property type="evidence" value="ECO:0007669"/>
    <property type="project" value="UniProtKB-KW"/>
</dbReference>
<dbReference type="GO" id="GO:0046872">
    <property type="term" value="F:metal ion binding"/>
    <property type="evidence" value="ECO:0007669"/>
    <property type="project" value="UniProtKB-KW"/>
</dbReference>
<dbReference type="GO" id="GO:0006085">
    <property type="term" value="P:acetyl-CoA biosynthetic process"/>
    <property type="evidence" value="ECO:0000318"/>
    <property type="project" value="GO_Central"/>
</dbReference>
<dbReference type="GO" id="GO:0019427">
    <property type="term" value="P:acetyl-CoA biosynthetic process from acetate"/>
    <property type="evidence" value="ECO:0007669"/>
    <property type="project" value="InterPro"/>
</dbReference>
<dbReference type="CDD" id="cd05966">
    <property type="entry name" value="ACS"/>
    <property type="match status" value="1"/>
</dbReference>
<dbReference type="FunFam" id="3.40.50.12780:FF:000001">
    <property type="entry name" value="Acetyl-coenzyme A synthetase"/>
    <property type="match status" value="1"/>
</dbReference>
<dbReference type="Gene3D" id="3.30.300.30">
    <property type="match status" value="1"/>
</dbReference>
<dbReference type="Gene3D" id="3.40.50.12780">
    <property type="entry name" value="N-terminal domain of ligase-like"/>
    <property type="match status" value="1"/>
</dbReference>
<dbReference type="HAMAP" id="MF_01123">
    <property type="entry name" value="Ac_CoA_synth"/>
    <property type="match status" value="1"/>
</dbReference>
<dbReference type="InterPro" id="IPR011904">
    <property type="entry name" value="Ac_CoA_lig"/>
</dbReference>
<dbReference type="InterPro" id="IPR032387">
    <property type="entry name" value="ACAS_N"/>
</dbReference>
<dbReference type="InterPro" id="IPR025110">
    <property type="entry name" value="AMP-bd_C"/>
</dbReference>
<dbReference type="InterPro" id="IPR045851">
    <property type="entry name" value="AMP-bd_C_sf"/>
</dbReference>
<dbReference type="InterPro" id="IPR020845">
    <property type="entry name" value="AMP-binding_CS"/>
</dbReference>
<dbReference type="InterPro" id="IPR000873">
    <property type="entry name" value="AMP-dep_synth/lig_dom"/>
</dbReference>
<dbReference type="InterPro" id="IPR042099">
    <property type="entry name" value="ANL_N_sf"/>
</dbReference>
<dbReference type="NCBIfam" id="TIGR02188">
    <property type="entry name" value="Ac_CoA_lig_AcsA"/>
    <property type="match status" value="1"/>
</dbReference>
<dbReference type="NCBIfam" id="NF001208">
    <property type="entry name" value="PRK00174.1"/>
    <property type="match status" value="1"/>
</dbReference>
<dbReference type="PANTHER" id="PTHR24095">
    <property type="entry name" value="ACETYL-COENZYME A SYNTHETASE"/>
    <property type="match status" value="1"/>
</dbReference>
<dbReference type="PANTHER" id="PTHR24095:SF232">
    <property type="entry name" value="ACETYL-COENZYME A SYNTHETASE"/>
    <property type="match status" value="1"/>
</dbReference>
<dbReference type="Pfam" id="PF16177">
    <property type="entry name" value="ACAS_N"/>
    <property type="match status" value="1"/>
</dbReference>
<dbReference type="Pfam" id="PF00501">
    <property type="entry name" value="AMP-binding"/>
    <property type="match status" value="1"/>
</dbReference>
<dbReference type="Pfam" id="PF13193">
    <property type="entry name" value="AMP-binding_C"/>
    <property type="match status" value="1"/>
</dbReference>
<dbReference type="SUPFAM" id="SSF56801">
    <property type="entry name" value="Acetyl-CoA synthetase-like"/>
    <property type="match status" value="1"/>
</dbReference>
<dbReference type="PROSITE" id="PS00455">
    <property type="entry name" value="AMP_BINDING"/>
    <property type="match status" value="1"/>
</dbReference>
<reference key="1">
    <citation type="submission" date="2000-03" db="EMBL/GenBank/DDBJ databases">
        <authorList>
            <person name="Fitz-Gibbon S.T."/>
            <person name="Choi A.J."/>
        </authorList>
    </citation>
    <scope>NUCLEOTIDE SEQUENCE [GENOMIC DNA]</scope>
    <source>
        <strain>ATCC 51768 / DSM 7523 / JCM 9630 / CIP 104966 / NBRC 100827 / IM2</strain>
    </source>
</reference>
<reference key="2">
    <citation type="journal article" date="2002" name="Proc. Natl. Acad. Sci. U.S.A.">
        <title>Genome sequence of the hyperthermophilic crenarchaeon Pyrobaculum aerophilum.</title>
        <authorList>
            <person name="Fitz-Gibbon S.T."/>
            <person name="Ladner H."/>
            <person name="Kim U.-J."/>
            <person name="Stetter K.O."/>
            <person name="Simon M.I."/>
            <person name="Miller J.H."/>
        </authorList>
    </citation>
    <scope>NUCLEOTIDE SEQUENCE [LARGE SCALE GENOMIC DNA]</scope>
    <source>
        <strain>ATCC 51768 / DSM 7523 / JCM 9630 / CIP 104966 / NBRC 100827 / IM2</strain>
    </source>
</reference>
<protein>
    <recommendedName>
        <fullName evidence="1">Acetyl-coenzyme A synthetase</fullName>
        <shortName evidence="1">AcCoA synthetase</shortName>
        <shortName evidence="1">Acs</shortName>
        <ecNumber evidence="1">6.2.1.1</ecNumber>
    </recommendedName>
    <alternativeName>
        <fullName evidence="1">Acetate--CoA ligase</fullName>
    </alternativeName>
    <alternativeName>
        <fullName evidence="1">Acyl-activating enzyme</fullName>
    </alternativeName>
</protein>
<keyword id="KW-0007">Acetylation</keyword>
<keyword id="KW-0067">ATP-binding</keyword>
<keyword id="KW-0436">Ligase</keyword>
<keyword id="KW-0460">Magnesium</keyword>
<keyword id="KW-0479">Metal-binding</keyword>
<keyword id="KW-0547">Nucleotide-binding</keyword>
<keyword id="KW-1185">Reference proteome</keyword>
<organism>
    <name type="scientific">Pyrobaculum aerophilum (strain ATCC 51768 / DSM 7523 / JCM 9630 / CIP 104966 / NBRC 100827 / IM2)</name>
    <dbReference type="NCBI Taxonomy" id="178306"/>
    <lineage>
        <taxon>Archaea</taxon>
        <taxon>Thermoproteota</taxon>
        <taxon>Thermoprotei</taxon>
        <taxon>Thermoproteales</taxon>
        <taxon>Thermoproteaceae</taxon>
        <taxon>Pyrobaculum</taxon>
    </lineage>
</organism>